<dbReference type="EC" id="6.1.1.26" evidence="1"/>
<dbReference type="EMBL" id="AE010299">
    <property type="protein sequence ID" value="AAM03608.1"/>
    <property type="status" value="ALT_INIT"/>
    <property type="molecule type" value="Genomic_DNA"/>
</dbReference>
<dbReference type="RefSeq" id="WP_011020213.1">
    <property type="nucleotide sequence ID" value="NC_003552.1"/>
</dbReference>
<dbReference type="SMR" id="Q8TUB8"/>
<dbReference type="STRING" id="188937.MA_0155"/>
<dbReference type="EnsemblBacteria" id="AAM03608">
    <property type="protein sequence ID" value="AAM03608"/>
    <property type="gene ID" value="MA_0155"/>
</dbReference>
<dbReference type="GeneID" id="1472047"/>
<dbReference type="KEGG" id="mac:MA_0155"/>
<dbReference type="HOGENOM" id="CLU_648316_0_0_2"/>
<dbReference type="InParanoid" id="Q8TUB8"/>
<dbReference type="OrthoDB" id="52632at2157"/>
<dbReference type="Proteomes" id="UP000002487">
    <property type="component" value="Chromosome"/>
</dbReference>
<dbReference type="GO" id="GO:0005737">
    <property type="term" value="C:cytoplasm"/>
    <property type="evidence" value="ECO:0007669"/>
    <property type="project" value="UniProtKB-SubCell"/>
</dbReference>
<dbReference type="GO" id="GO:0004816">
    <property type="term" value="F:asparagine-tRNA ligase activity"/>
    <property type="evidence" value="ECO:0000318"/>
    <property type="project" value="GO_Central"/>
</dbReference>
<dbReference type="GO" id="GO:0005524">
    <property type="term" value="F:ATP binding"/>
    <property type="evidence" value="ECO:0007669"/>
    <property type="project" value="UniProtKB-UniRule"/>
</dbReference>
<dbReference type="GO" id="GO:0043767">
    <property type="term" value="F:pyrrolysyl-tRNA synthetase activity"/>
    <property type="evidence" value="ECO:0007669"/>
    <property type="project" value="UniProtKB-EC"/>
</dbReference>
<dbReference type="GO" id="GO:0000049">
    <property type="term" value="F:tRNA binding"/>
    <property type="evidence" value="ECO:0007669"/>
    <property type="project" value="InterPro"/>
</dbReference>
<dbReference type="GO" id="GO:0006421">
    <property type="term" value="P:asparaginyl-tRNA aminoacylation"/>
    <property type="evidence" value="ECO:0000318"/>
    <property type="project" value="GO_Central"/>
</dbReference>
<dbReference type="Gene3D" id="3.30.930.10">
    <property type="entry name" value="Bira Bifunctional Protein, Domain 2"/>
    <property type="match status" value="1"/>
</dbReference>
<dbReference type="Gene3D" id="1.10.287.540">
    <property type="entry name" value="Helix hairpin bin"/>
    <property type="match status" value="1"/>
</dbReference>
<dbReference type="HAMAP" id="MF_01573">
    <property type="entry name" value="Pyl_tRNA_synth"/>
    <property type="match status" value="1"/>
</dbReference>
<dbReference type="InterPro" id="IPR006195">
    <property type="entry name" value="aa-tRNA-synth_II"/>
</dbReference>
<dbReference type="InterPro" id="IPR045864">
    <property type="entry name" value="aa-tRNA-synth_II/BPL/LPL"/>
</dbReference>
<dbReference type="InterPro" id="IPR002319">
    <property type="entry name" value="Phenylalanyl-tRNA_Synthase"/>
</dbReference>
<dbReference type="InterPro" id="IPR012739">
    <property type="entry name" value="Pyrrolysyl-tRNA_ligase"/>
</dbReference>
<dbReference type="InterPro" id="IPR023877">
    <property type="entry name" value="Pyrrolysyl-tRNA_ligase_C"/>
</dbReference>
<dbReference type="InterPro" id="IPR023878">
    <property type="entry name" value="Pyrrolysyl-tRNA_ligase_N"/>
</dbReference>
<dbReference type="NCBIfam" id="NF007083">
    <property type="entry name" value="PRK09537.1"/>
    <property type="match status" value="1"/>
</dbReference>
<dbReference type="NCBIfam" id="TIGR02367">
    <property type="entry name" value="PylS_Cterm"/>
    <property type="match status" value="1"/>
</dbReference>
<dbReference type="NCBIfam" id="TIGR03912">
    <property type="entry name" value="PylS_Nterm"/>
    <property type="match status" value="1"/>
</dbReference>
<dbReference type="Pfam" id="PF01409">
    <property type="entry name" value="tRNA-synt_2d"/>
    <property type="match status" value="1"/>
</dbReference>
<dbReference type="SUPFAM" id="SSF55681">
    <property type="entry name" value="Class II aaRS and biotin synthetases"/>
    <property type="match status" value="1"/>
</dbReference>
<dbReference type="PROSITE" id="PS50862">
    <property type="entry name" value="AA_TRNA_LIGASE_II"/>
    <property type="match status" value="1"/>
</dbReference>
<reference key="1">
    <citation type="journal article" date="2002" name="Genome Res.">
        <title>The genome of Methanosarcina acetivorans reveals extensive metabolic and physiological diversity.</title>
        <authorList>
            <person name="Galagan J.E."/>
            <person name="Nusbaum C."/>
            <person name="Roy A."/>
            <person name="Endrizzi M.G."/>
            <person name="Macdonald P."/>
            <person name="FitzHugh W."/>
            <person name="Calvo S."/>
            <person name="Engels R."/>
            <person name="Smirnov S."/>
            <person name="Atnoor D."/>
            <person name="Brown A."/>
            <person name="Allen N."/>
            <person name="Naylor J."/>
            <person name="Stange-Thomann N."/>
            <person name="DeArellano K."/>
            <person name="Johnson R."/>
            <person name="Linton L."/>
            <person name="McEwan P."/>
            <person name="McKernan K."/>
            <person name="Talamas J."/>
            <person name="Tirrell A."/>
            <person name="Ye W."/>
            <person name="Zimmer A."/>
            <person name="Barber R.D."/>
            <person name="Cann I."/>
            <person name="Graham D.E."/>
            <person name="Grahame D.A."/>
            <person name="Guss A.M."/>
            <person name="Hedderich R."/>
            <person name="Ingram-Smith C."/>
            <person name="Kuettner H.C."/>
            <person name="Krzycki J.A."/>
            <person name="Leigh J.A."/>
            <person name="Li W."/>
            <person name="Liu J."/>
            <person name="Mukhopadhyay B."/>
            <person name="Reeve J.N."/>
            <person name="Smith K."/>
            <person name="Springer T.A."/>
            <person name="Umayam L.A."/>
            <person name="White O."/>
            <person name="White R.H."/>
            <person name="de Macario E.C."/>
            <person name="Ferry J.G."/>
            <person name="Jarrell K.F."/>
            <person name="Jing H."/>
            <person name="Macario A.J.L."/>
            <person name="Paulsen I.T."/>
            <person name="Pritchett M."/>
            <person name="Sowers K.R."/>
            <person name="Swanson R.V."/>
            <person name="Zinder S.H."/>
            <person name="Lander E."/>
            <person name="Metcalf W.W."/>
            <person name="Birren B."/>
        </authorList>
    </citation>
    <scope>NUCLEOTIDE SEQUENCE [LARGE SCALE GENOMIC DNA]</scope>
    <source>
        <strain>ATCC 35395 / DSM 2834 / JCM 12185 / C2A</strain>
    </source>
</reference>
<proteinExistence type="inferred from homology"/>
<protein>
    <recommendedName>
        <fullName evidence="1">Pyrrolysine--tRNA ligase</fullName>
        <ecNumber evidence="1">6.1.1.26</ecNumber>
    </recommendedName>
    <alternativeName>
        <fullName>Pyrrolysine--tRNA(Pyl) ligase</fullName>
    </alternativeName>
    <alternativeName>
        <fullName evidence="1">Pyrrolysyl-tRNA synthetase</fullName>
        <shortName evidence="1">PylRS</shortName>
    </alternativeName>
</protein>
<feature type="chain" id="PRO_0000260451" description="Pyrrolysine--tRNA ligase">
    <location>
        <begin position="1"/>
        <end position="443"/>
    </location>
</feature>
<feature type="region of interest" description="Disordered" evidence="2">
    <location>
        <begin position="103"/>
        <end position="177"/>
    </location>
</feature>
<feature type="compositionally biased region" description="Low complexity" evidence="2">
    <location>
        <begin position="131"/>
        <end position="177"/>
    </location>
</feature>
<name>PYLS_METAC</name>
<keyword id="KW-0030">Aminoacyl-tRNA synthetase</keyword>
<keyword id="KW-0067">ATP-binding</keyword>
<keyword id="KW-0963">Cytoplasm</keyword>
<keyword id="KW-0436">Ligase</keyword>
<keyword id="KW-0547">Nucleotide-binding</keyword>
<keyword id="KW-0648">Protein biosynthesis</keyword>
<keyword id="KW-1185">Reference proteome</keyword>
<organism>
    <name type="scientific">Methanosarcina acetivorans (strain ATCC 35395 / DSM 2834 / JCM 12185 / C2A)</name>
    <dbReference type="NCBI Taxonomy" id="188937"/>
    <lineage>
        <taxon>Archaea</taxon>
        <taxon>Methanobacteriati</taxon>
        <taxon>Methanobacteriota</taxon>
        <taxon>Stenosarchaea group</taxon>
        <taxon>Methanomicrobia</taxon>
        <taxon>Methanosarcinales</taxon>
        <taxon>Methanosarcinaceae</taxon>
        <taxon>Methanosarcina</taxon>
    </lineage>
</organism>
<comment type="function">
    <text evidence="1">Catalyzes the attachment of pyrrolysine to tRNA(Pyl). Pyrrolysine is a lysine derivative encoded by the termination codon UAG.</text>
</comment>
<comment type="catalytic activity">
    <reaction evidence="1">
        <text>tRNA(Pyl) + L-pyrrolysine + ATP = L-pyrrolysyl-tRNA(Pyl) + AMP + diphosphate</text>
        <dbReference type="Rhea" id="RHEA:19277"/>
        <dbReference type="Rhea" id="RHEA-COMP:9720"/>
        <dbReference type="Rhea" id="RHEA-COMP:9721"/>
        <dbReference type="ChEBI" id="CHEBI:30616"/>
        <dbReference type="ChEBI" id="CHEBI:33019"/>
        <dbReference type="ChEBI" id="CHEBI:58499"/>
        <dbReference type="ChEBI" id="CHEBI:78442"/>
        <dbReference type="ChEBI" id="CHEBI:78556"/>
        <dbReference type="ChEBI" id="CHEBI:456215"/>
        <dbReference type="EC" id="6.1.1.26"/>
    </reaction>
</comment>
<comment type="subcellular location">
    <subcellularLocation>
        <location evidence="1">Cytoplasm</location>
    </subcellularLocation>
</comment>
<comment type="similarity">
    <text evidence="1">Belongs to the class-II aminoacyl-tRNA synthetase family.</text>
</comment>
<comment type="sequence caution" evidence="3">
    <conflict type="erroneous initiation">
        <sequence resource="EMBL-CDS" id="AAM03608"/>
    </conflict>
</comment>
<sequence length="443" mass="49531">MDKKPLDTLISATGLWMSRTGMIHKIKHHEVSRSKIYIEMACGERLVVNNSRSSRTARALRHHKYRKTCRHCRVSDEDINNFLTKTSEEKTTVKVKVVSAPRVRKAMPKSVARAPKPLEATAQVPLSGSKPAPATPVSAPAQAPAPSTGSASATSASAQRMANSAAAPAAPVPTSAPALTKGQLDRLEGLLSPKDEISLDSEKPFRELESELLSRRKKDLKRIYAEERENYLGKLEREITKFFVDRGFLEIKSPILIPAEYVERMGINSDTELSKQVFRIDKNFCLRPMLAPNLYNYLRKLDRALPDPIKIFEIGPCYRKESDGKEHLEEFTMLNFCQMGSGCTRENLEAIITEFLNHLGIDFEIIGDSCMVYGNTLDVMHDDLELSSAVVGPVPLDREWGIDKPWIGAGFGLERLLKVMHGFKNIKRAARSESYYNGISTNL</sequence>
<accession>Q8TUB8</accession>
<gene>
    <name evidence="1" type="primary">pylS</name>
    <name type="ordered locus">MA_0155</name>
</gene>
<evidence type="ECO:0000255" key="1">
    <source>
        <dbReference type="HAMAP-Rule" id="MF_01573"/>
    </source>
</evidence>
<evidence type="ECO:0000256" key="2">
    <source>
        <dbReference type="SAM" id="MobiDB-lite"/>
    </source>
</evidence>
<evidence type="ECO:0000305" key="3"/>